<proteinExistence type="inferred from homology"/>
<evidence type="ECO:0000255" key="1">
    <source>
        <dbReference type="HAMAP-Rule" id="MF_00414"/>
    </source>
</evidence>
<name>UBIB_PSEFS</name>
<organism>
    <name type="scientific">Pseudomonas fluorescens (strain SBW25)</name>
    <dbReference type="NCBI Taxonomy" id="216595"/>
    <lineage>
        <taxon>Bacteria</taxon>
        <taxon>Pseudomonadati</taxon>
        <taxon>Pseudomonadota</taxon>
        <taxon>Gammaproteobacteria</taxon>
        <taxon>Pseudomonadales</taxon>
        <taxon>Pseudomonadaceae</taxon>
        <taxon>Pseudomonas</taxon>
    </lineage>
</organism>
<dbReference type="EC" id="2.7.-.-" evidence="1"/>
<dbReference type="EMBL" id="AM181176">
    <property type="protein sequence ID" value="CAY46664.1"/>
    <property type="molecule type" value="Genomic_DNA"/>
</dbReference>
<dbReference type="RefSeq" id="WP_012721797.1">
    <property type="nucleotide sequence ID" value="NC_012660.1"/>
</dbReference>
<dbReference type="SMR" id="C3K8U2"/>
<dbReference type="STRING" id="294.SRM1_00436"/>
<dbReference type="eggNOG" id="COG0661">
    <property type="taxonomic scope" value="Bacteria"/>
</dbReference>
<dbReference type="HOGENOM" id="CLU_006533_0_0_6"/>
<dbReference type="OrthoDB" id="9795390at2"/>
<dbReference type="UniPathway" id="UPA00232"/>
<dbReference type="GO" id="GO:0005886">
    <property type="term" value="C:plasma membrane"/>
    <property type="evidence" value="ECO:0007669"/>
    <property type="project" value="UniProtKB-SubCell"/>
</dbReference>
<dbReference type="GO" id="GO:0005524">
    <property type="term" value="F:ATP binding"/>
    <property type="evidence" value="ECO:0007669"/>
    <property type="project" value="UniProtKB-KW"/>
</dbReference>
<dbReference type="GO" id="GO:0004672">
    <property type="term" value="F:protein kinase activity"/>
    <property type="evidence" value="ECO:0007669"/>
    <property type="project" value="UniProtKB-UniRule"/>
</dbReference>
<dbReference type="GO" id="GO:0010795">
    <property type="term" value="P:regulation of ubiquinone biosynthetic process"/>
    <property type="evidence" value="ECO:0007669"/>
    <property type="project" value="UniProtKB-UniRule"/>
</dbReference>
<dbReference type="GO" id="GO:0006744">
    <property type="term" value="P:ubiquinone biosynthetic process"/>
    <property type="evidence" value="ECO:0007669"/>
    <property type="project" value="UniProtKB-UniPathway"/>
</dbReference>
<dbReference type="CDD" id="cd13972">
    <property type="entry name" value="UbiB"/>
    <property type="match status" value="1"/>
</dbReference>
<dbReference type="HAMAP" id="MF_00414">
    <property type="entry name" value="UbiB"/>
    <property type="match status" value="1"/>
</dbReference>
<dbReference type="InterPro" id="IPR004147">
    <property type="entry name" value="ABC1_dom"/>
</dbReference>
<dbReference type="InterPro" id="IPR011009">
    <property type="entry name" value="Kinase-like_dom_sf"/>
</dbReference>
<dbReference type="InterPro" id="IPR010232">
    <property type="entry name" value="UbiB"/>
</dbReference>
<dbReference type="InterPro" id="IPR045308">
    <property type="entry name" value="UbiB_bact"/>
</dbReference>
<dbReference type="InterPro" id="IPR050154">
    <property type="entry name" value="UbiB_kinase"/>
</dbReference>
<dbReference type="NCBIfam" id="NF003404">
    <property type="entry name" value="PRK04750.1"/>
    <property type="match status" value="1"/>
</dbReference>
<dbReference type="NCBIfam" id="TIGR01982">
    <property type="entry name" value="UbiB"/>
    <property type="match status" value="1"/>
</dbReference>
<dbReference type="PANTHER" id="PTHR10566">
    <property type="entry name" value="CHAPERONE-ACTIVITY OF BC1 COMPLEX CABC1 -RELATED"/>
    <property type="match status" value="1"/>
</dbReference>
<dbReference type="PANTHER" id="PTHR10566:SF113">
    <property type="entry name" value="PROTEIN ACTIVITY OF BC1 COMPLEX KINASE 7, CHLOROPLASTIC"/>
    <property type="match status" value="1"/>
</dbReference>
<dbReference type="Pfam" id="PF03109">
    <property type="entry name" value="ABC1"/>
    <property type="match status" value="1"/>
</dbReference>
<dbReference type="SUPFAM" id="SSF56112">
    <property type="entry name" value="Protein kinase-like (PK-like)"/>
    <property type="match status" value="1"/>
</dbReference>
<comment type="function">
    <text evidence="1">Is probably a protein kinase regulator of UbiI activity which is involved in aerobic coenzyme Q (ubiquinone) biosynthesis.</text>
</comment>
<comment type="pathway">
    <text>Cofactor biosynthesis; ubiquinone biosynthesis [regulation].</text>
</comment>
<comment type="subcellular location">
    <subcellularLocation>
        <location evidence="1">Cell inner membrane</location>
        <topology evidence="1">Multi-pass membrane protein</topology>
    </subcellularLocation>
</comment>
<comment type="similarity">
    <text evidence="1">Belongs to the ABC1 family. UbiB subfamily.</text>
</comment>
<accession>C3K8U2</accession>
<sequence>MKLLAVRRLFRIQRVVIRYRLDDLLFALPLPWFLLAVRYVLPWRWFPRKQLELSRGARLRLALQDLGPIFIKFGQILSTRRDLLPEDIADELMLLQDRVPPFDSQQSMKLIEEQLGKKISEVFSRFDVDPLASASVAQVHAAQLKTGEEVVVKVIRPGLKPIIGQDLAWLFILARAAERFSADARLLHPVDVVADYEKTIYDELDLLREAANASQLKRNFEGSPLLYVPQVYWDWCRPKVLVMERIYGVQVTDLATLADQRTDMKMLAERGVEIFFTQVFRDSFFHADMHPGNIFVSTVNPWSPQYIAIDCGIVGSLTPEDQDYLARNLFAFFKRDYRRVAQLHIDSGWVPAETKLNEFEAAIRTVCEPIFEKPLKDISFGQVLMRLFQTARRFNMEVQPQLVLLQKTLLNIEGLGRQLYPDLDLWNTAQPFLERWMRERMSPKTVLGNLHSQMEQLPHLANMTRDLLERMSQPHAKDPAPPWKKRKDDWFLRLLGAAHLVGGVMLAIGGPLNQLGHWPAGIMVAVGVYLIVRR</sequence>
<keyword id="KW-0067">ATP-binding</keyword>
<keyword id="KW-0997">Cell inner membrane</keyword>
<keyword id="KW-1003">Cell membrane</keyword>
<keyword id="KW-0418">Kinase</keyword>
<keyword id="KW-0472">Membrane</keyword>
<keyword id="KW-0547">Nucleotide-binding</keyword>
<keyword id="KW-0808">Transferase</keyword>
<keyword id="KW-0812">Transmembrane</keyword>
<keyword id="KW-1133">Transmembrane helix</keyword>
<keyword id="KW-0831">Ubiquinone biosynthesis</keyword>
<gene>
    <name evidence="1" type="primary">ubiB</name>
    <name type="ordered locus">PFLU_0387</name>
</gene>
<feature type="chain" id="PRO_1000206016" description="Probable protein kinase UbiB">
    <location>
        <begin position="1"/>
        <end position="534"/>
    </location>
</feature>
<feature type="transmembrane region" description="Helical" evidence="1">
    <location>
        <begin position="23"/>
        <end position="43"/>
    </location>
</feature>
<feature type="transmembrane region" description="Helical" evidence="1">
    <location>
        <begin position="490"/>
        <end position="510"/>
    </location>
</feature>
<feature type="transmembrane region" description="Helical" evidence="1">
    <location>
        <begin position="512"/>
        <end position="532"/>
    </location>
</feature>
<feature type="domain" description="Protein kinase" evidence="1">
    <location>
        <begin position="125"/>
        <end position="492"/>
    </location>
</feature>
<feature type="active site" description="Proton acceptor" evidence="1">
    <location>
        <position position="288"/>
    </location>
</feature>
<feature type="binding site" evidence="1">
    <location>
        <begin position="131"/>
        <end position="139"/>
    </location>
    <ligand>
        <name>ATP</name>
        <dbReference type="ChEBI" id="CHEBI:30616"/>
    </ligand>
</feature>
<feature type="binding site" evidence="1">
    <location>
        <position position="153"/>
    </location>
    <ligand>
        <name>ATP</name>
        <dbReference type="ChEBI" id="CHEBI:30616"/>
    </ligand>
</feature>
<reference key="1">
    <citation type="journal article" date="2009" name="Genome Biol.">
        <title>Genomic and genetic analyses of diversity and plant interactions of Pseudomonas fluorescens.</title>
        <authorList>
            <person name="Silby M.W."/>
            <person name="Cerdeno-Tarraga A.M."/>
            <person name="Vernikos G.S."/>
            <person name="Giddens S.R."/>
            <person name="Jackson R.W."/>
            <person name="Preston G.M."/>
            <person name="Zhang X.-X."/>
            <person name="Moon C.D."/>
            <person name="Gehrig S.M."/>
            <person name="Godfrey S.A.C."/>
            <person name="Knight C.G."/>
            <person name="Malone J.G."/>
            <person name="Robinson Z."/>
            <person name="Spiers A.J."/>
            <person name="Harris S."/>
            <person name="Challis G.L."/>
            <person name="Yaxley A.M."/>
            <person name="Harris D."/>
            <person name="Seeger K."/>
            <person name="Murphy L."/>
            <person name="Rutter S."/>
            <person name="Squares R."/>
            <person name="Quail M.A."/>
            <person name="Saunders E."/>
            <person name="Mavromatis K."/>
            <person name="Brettin T.S."/>
            <person name="Bentley S.D."/>
            <person name="Hothersall J."/>
            <person name="Stephens E."/>
            <person name="Thomas C.M."/>
            <person name="Parkhill J."/>
            <person name="Levy S.B."/>
            <person name="Rainey P.B."/>
            <person name="Thomson N.R."/>
        </authorList>
    </citation>
    <scope>NUCLEOTIDE SEQUENCE [LARGE SCALE GENOMIC DNA]</scope>
    <source>
        <strain>SBW25</strain>
    </source>
</reference>
<protein>
    <recommendedName>
        <fullName evidence="1">Probable protein kinase UbiB</fullName>
        <ecNumber evidence="1">2.7.-.-</ecNumber>
    </recommendedName>
    <alternativeName>
        <fullName evidence="1">Ubiquinone biosynthesis protein UbiB</fullName>
    </alternativeName>
</protein>